<proteinExistence type="evidence at transcript level"/>
<comment type="function">
    <text evidence="1 2 3 7 8">Involved in the final steps of cytoplasmic maturation of the 40S ribosomal subunit (By similarity). Despite the protein kinase domain is proposed to act predominantly as an ATPase (By similarity). The catalytic activity regulates its dynamic association with the 40S subunit (By similarity). Plays a role in oogenesis by regulating germ cell proliferation, progression through diplotene and diakinesis stages and oocyte maturation (PubMed:24929033, PubMed:25688864). Regulates germline development probably by regulating the phosphorylation of mpk-1 (PubMed:25688864). Involved in larval development (PubMed:24929033, PubMed:25688864).</text>
</comment>
<comment type="catalytic activity">
    <reaction evidence="4">
        <text>L-seryl-[protein] + ATP = O-phospho-L-seryl-[protein] + ADP + H(+)</text>
        <dbReference type="Rhea" id="RHEA:17989"/>
        <dbReference type="Rhea" id="RHEA-COMP:9863"/>
        <dbReference type="Rhea" id="RHEA-COMP:11604"/>
        <dbReference type="ChEBI" id="CHEBI:15378"/>
        <dbReference type="ChEBI" id="CHEBI:29999"/>
        <dbReference type="ChEBI" id="CHEBI:30616"/>
        <dbReference type="ChEBI" id="CHEBI:83421"/>
        <dbReference type="ChEBI" id="CHEBI:456216"/>
        <dbReference type="EC" id="2.7.11.1"/>
    </reaction>
</comment>
<comment type="catalytic activity">
    <reaction evidence="4">
        <text>L-threonyl-[protein] + ATP = O-phospho-L-threonyl-[protein] + ADP + H(+)</text>
        <dbReference type="Rhea" id="RHEA:46608"/>
        <dbReference type="Rhea" id="RHEA-COMP:11060"/>
        <dbReference type="Rhea" id="RHEA-COMP:11605"/>
        <dbReference type="ChEBI" id="CHEBI:15378"/>
        <dbReference type="ChEBI" id="CHEBI:30013"/>
        <dbReference type="ChEBI" id="CHEBI:30616"/>
        <dbReference type="ChEBI" id="CHEBI:61977"/>
        <dbReference type="ChEBI" id="CHEBI:456216"/>
        <dbReference type="EC" id="2.7.11.1"/>
    </reaction>
</comment>
<comment type="cofactor">
    <cofactor evidence="9">
        <name>Mg(2+)</name>
        <dbReference type="ChEBI" id="CHEBI:18420"/>
    </cofactor>
</comment>
<comment type="subcellular location">
    <subcellularLocation>
        <location evidence="9">Cytoplasm</location>
    </subcellularLocation>
</comment>
<comment type="tissue specificity">
    <text evidence="7 8">Expressed in vulva and uterine cells, uterine seam cells (utse), spermatheca and in the nervous system including chemosensory neurons in the head, nerve ring neurons (RID/RIF), inhibitory motor neurons (DA/DD/VA/VD), mechanosensory neurons (ALML/PLML) and tail sensory neurons (DVA//PDA) (PubMed:24929033, PubMed:25688864). Also expressed in intestine and pharynx (procorpus) and rectal valve and gland (PubMed:25688864).</text>
</comment>
<comment type="developmental stage">
    <text evidence="7">Expressed in the nervous system at all larval stages. Expressed in somatic gonad and in the ventral nerve cord at L2 larval stage. Expressed in somatic gonad, in ventral uterine (VU/AC) cells and in the committed anchor cell at L3 larval stage. Expressed in vulF cells of the vulva, uterine cells and in uterine seam cells (utse) at L4 larval stage.</text>
</comment>
<comment type="disruption phenotype">
    <text evidence="7 8">RNAi-mediated knockdown causes early larval arrest. In adults, results in sterility. Causes malformations of the gonad arms (empty or misshaped) and a protruding vulva (PubMed:24929033). Abnormal germline development characterized by a decrease in the number of proliferating germ cells in the mitotic and transition zones. At the diplotene stage, cells are disorganized and have enlarged nuclei. Oocytes have abnormal shape and large DNA aggregates next to abnormally located sperm. In addition, 50 percent of cells fails to decrease mpk-1 phosphorylation upon pachytene stage exit (PubMed:24929033, PubMed:25688864). RNAi-mediated knockdown in a let-60 n1046 mutant background suppresses the formation of multivulva (PubMed:24929033).</text>
</comment>
<comment type="similarity">
    <text evidence="9">Belongs to the protein kinase superfamily. RIO-type Ser/Thr kinase family.</text>
</comment>
<accession>O44959</accession>
<feature type="chain" id="PRO_0000434605" description="Serine/threonine-protein kinase RIO1" evidence="9">
    <location>
        <begin position="1"/>
        <end position="506"/>
    </location>
</feature>
<feature type="domain" description="Protein kinase" evidence="5">
    <location>
        <begin position="142"/>
        <end position="506"/>
    </location>
</feature>
<feature type="region of interest" description="Disordered" evidence="6">
    <location>
        <begin position="22"/>
        <end position="52"/>
    </location>
</feature>
<feature type="region of interest" description="Disordered" evidence="6">
    <location>
        <begin position="418"/>
        <end position="506"/>
    </location>
</feature>
<feature type="compositionally biased region" description="Acidic residues" evidence="6">
    <location>
        <begin position="424"/>
        <end position="435"/>
    </location>
</feature>
<feature type="compositionally biased region" description="Basic and acidic residues" evidence="6">
    <location>
        <begin position="454"/>
        <end position="490"/>
    </location>
</feature>
<feature type="compositionally biased region" description="Basic residues" evidence="6">
    <location>
        <begin position="491"/>
        <end position="506"/>
    </location>
</feature>
<feature type="active site" description="Proton acceptor" evidence="3 5">
    <location>
        <position position="285"/>
    </location>
</feature>
<feature type="active site" description="4-aspartylphosphate intermediate" evidence="3">
    <location>
        <position position="302"/>
    </location>
</feature>
<feature type="binding site" evidence="5">
    <location>
        <begin position="148"/>
        <end position="156"/>
    </location>
    <ligand>
        <name>ATP</name>
        <dbReference type="ChEBI" id="CHEBI:30616"/>
    </ligand>
</feature>
<feature type="binding site" evidence="3">
    <location>
        <position position="169"/>
    </location>
    <ligand>
        <name>ATP</name>
        <dbReference type="ChEBI" id="CHEBI:30616"/>
    </ligand>
</feature>
<feature type="binding site" evidence="3">
    <location>
        <position position="241"/>
    </location>
    <ligand>
        <name>ATP</name>
        <dbReference type="ChEBI" id="CHEBI:30616"/>
    </ligand>
</feature>
<feature type="binding site" evidence="3">
    <location>
        <position position="290"/>
    </location>
    <ligand>
        <name>ATP</name>
        <dbReference type="ChEBI" id="CHEBI:30616"/>
    </ligand>
</feature>
<feature type="binding site" evidence="3">
    <location>
        <position position="290"/>
    </location>
    <ligand>
        <name>Mg(2+)</name>
        <dbReference type="ChEBI" id="CHEBI:18420"/>
    </ligand>
</feature>
<feature type="binding site" evidence="3">
    <location>
        <position position="302"/>
    </location>
    <ligand>
        <name>Mg(2+)</name>
        <dbReference type="ChEBI" id="CHEBI:18420"/>
    </ligand>
</feature>
<keyword id="KW-0067">ATP-binding</keyword>
<keyword id="KW-0963">Cytoplasm</keyword>
<keyword id="KW-0378">Hydrolase</keyword>
<keyword id="KW-0418">Kinase</keyword>
<keyword id="KW-0460">Magnesium</keyword>
<keyword id="KW-0469">Meiosis</keyword>
<keyword id="KW-0479">Metal-binding</keyword>
<keyword id="KW-0547">Nucleotide-binding</keyword>
<keyword id="KW-1185">Reference proteome</keyword>
<keyword id="KW-0690">Ribosome biogenesis</keyword>
<keyword id="KW-0723">Serine/threonine-protein kinase</keyword>
<keyword id="KW-0808">Transferase</keyword>
<reference evidence="10" key="1">
    <citation type="journal article" date="1998" name="Science">
        <title>Genome sequence of the nematode C. elegans: a platform for investigating biology.</title>
        <authorList>
            <consortium name="The C. elegans sequencing consortium"/>
        </authorList>
    </citation>
    <scope>NUCLEOTIDE SEQUENCE [LARGE SCALE GENOMIC DNA]</scope>
    <source>
        <strain evidence="10">Bristol N2</strain>
    </source>
</reference>
<reference evidence="9" key="2">
    <citation type="journal article" date="2014" name="Gene Expr. Patterns">
        <title>Expression pattern and first functional characterization of riok-1 in Caenorhabditis elegans.</title>
        <authorList>
            <person name="Weinberg F."/>
            <person name="Schulze E."/>
            <person name="Fatouros C."/>
            <person name="Schmidt E."/>
            <person name="Baumeister R."/>
            <person name="Brummer T."/>
        </authorList>
    </citation>
    <scope>FUNCTION</scope>
    <scope>TISSUE SPECIFICITY</scope>
    <scope>DEVELOPMENTAL STAGE</scope>
    <scope>DISRUPTION PHENOTYPE</scope>
</reference>
<reference evidence="9" key="3">
    <citation type="journal article" date="2015" name="PLoS ONE">
        <title>Investigating the role of RIO protein kinases in Caenorhabditis elegans.</title>
        <authorList>
            <person name="Mendes T.K."/>
            <person name="Novakovic S."/>
            <person name="Raymant G."/>
            <person name="Bertram S.E."/>
            <person name="Esmaillie R."/>
            <person name="Nadarajan S."/>
            <person name="Breugelmans B."/>
            <person name="Hofmann A."/>
            <person name="Gasser R.B."/>
            <person name="Colaiacovo M.P."/>
            <person name="Boag P.R."/>
        </authorList>
    </citation>
    <scope>FUNCTION</scope>
    <scope>TISSUE SPECIFICITY</scope>
    <scope>DISRUPTION PHENOTYPE</scope>
</reference>
<gene>
    <name evidence="11" type="primary">riok-1</name>
    <name evidence="11" type="ORF">M01B12.5</name>
</gene>
<dbReference type="EC" id="2.7.11.1" evidence="4"/>
<dbReference type="EMBL" id="BX284601">
    <property type="protein sequence ID" value="CCD67367.1"/>
    <property type="molecule type" value="Genomic_DNA"/>
</dbReference>
<dbReference type="PIR" id="T33172">
    <property type="entry name" value="T33172"/>
</dbReference>
<dbReference type="RefSeq" id="NP_001021570.2">
    <property type="nucleotide sequence ID" value="NM_001026399.10"/>
</dbReference>
<dbReference type="SMR" id="O44959"/>
<dbReference type="FunCoup" id="O44959">
    <property type="interactions" value="2796"/>
</dbReference>
<dbReference type="STRING" id="6239.M01B12.5a.2"/>
<dbReference type="PaxDb" id="6239-M01B12.5a.1"/>
<dbReference type="PeptideAtlas" id="O44959"/>
<dbReference type="EnsemblMetazoa" id="M01B12.5a.1">
    <property type="protein sequence ID" value="M01B12.5a.1"/>
    <property type="gene ID" value="WBGene00019698"/>
</dbReference>
<dbReference type="EnsemblMetazoa" id="M01B12.5a.2">
    <property type="protein sequence ID" value="M01B12.5a.2"/>
    <property type="gene ID" value="WBGene00019698"/>
</dbReference>
<dbReference type="GeneID" id="171883"/>
<dbReference type="KEGG" id="cel:CELE_M01B12.5"/>
<dbReference type="UCSC" id="M01B12.5a">
    <property type="organism name" value="c. elegans"/>
</dbReference>
<dbReference type="AGR" id="WB:WBGene00019698"/>
<dbReference type="CTD" id="171883"/>
<dbReference type="WormBase" id="M01B12.5a">
    <property type="protein sequence ID" value="CE30555"/>
    <property type="gene ID" value="WBGene00019698"/>
    <property type="gene designation" value="riok-1"/>
</dbReference>
<dbReference type="eggNOG" id="KOG2270">
    <property type="taxonomic scope" value="Eukaryota"/>
</dbReference>
<dbReference type="GeneTree" id="ENSGT00940000157075"/>
<dbReference type="HOGENOM" id="CLU_018693_4_3_1"/>
<dbReference type="InParanoid" id="O44959"/>
<dbReference type="OMA" id="HPMSLDF"/>
<dbReference type="OrthoDB" id="205248at2759"/>
<dbReference type="PhylomeDB" id="O44959"/>
<dbReference type="PRO" id="PR:O44959"/>
<dbReference type="Proteomes" id="UP000001940">
    <property type="component" value="Chromosome I"/>
</dbReference>
<dbReference type="Bgee" id="WBGene00019698">
    <property type="expression patterns" value="Expressed in embryo and 4 other cell types or tissues"/>
</dbReference>
<dbReference type="GO" id="GO:0005829">
    <property type="term" value="C:cytosol"/>
    <property type="evidence" value="ECO:0000318"/>
    <property type="project" value="GO_Central"/>
</dbReference>
<dbReference type="GO" id="GO:0030688">
    <property type="term" value="C:preribosome, small subunit precursor"/>
    <property type="evidence" value="ECO:0000318"/>
    <property type="project" value="GO_Central"/>
</dbReference>
<dbReference type="GO" id="GO:0005524">
    <property type="term" value="F:ATP binding"/>
    <property type="evidence" value="ECO:0007669"/>
    <property type="project" value="UniProtKB-KW"/>
</dbReference>
<dbReference type="GO" id="GO:0016787">
    <property type="term" value="F:hydrolase activity"/>
    <property type="evidence" value="ECO:0007669"/>
    <property type="project" value="UniProtKB-KW"/>
</dbReference>
<dbReference type="GO" id="GO:0046872">
    <property type="term" value="F:metal ion binding"/>
    <property type="evidence" value="ECO:0007669"/>
    <property type="project" value="UniProtKB-KW"/>
</dbReference>
<dbReference type="GO" id="GO:0106310">
    <property type="term" value="F:protein serine kinase activity"/>
    <property type="evidence" value="ECO:0007669"/>
    <property type="project" value="RHEA"/>
</dbReference>
<dbReference type="GO" id="GO:0004674">
    <property type="term" value="F:protein serine/threonine kinase activity"/>
    <property type="evidence" value="ECO:0000318"/>
    <property type="project" value="GO_Central"/>
</dbReference>
<dbReference type="GO" id="GO:0007281">
    <property type="term" value="P:germ cell development"/>
    <property type="evidence" value="ECO:0000315"/>
    <property type="project" value="WormBase"/>
</dbReference>
<dbReference type="GO" id="GO:0036093">
    <property type="term" value="P:germ cell proliferation"/>
    <property type="evidence" value="ECO:0000315"/>
    <property type="project" value="WormBase"/>
</dbReference>
<dbReference type="GO" id="GO:0008406">
    <property type="term" value="P:gonad development"/>
    <property type="evidence" value="ECO:0000315"/>
    <property type="project" value="WormBase"/>
</dbReference>
<dbReference type="GO" id="GO:0030490">
    <property type="term" value="P:maturation of SSU-rRNA"/>
    <property type="evidence" value="ECO:0000318"/>
    <property type="project" value="GO_Central"/>
</dbReference>
<dbReference type="GO" id="GO:0051321">
    <property type="term" value="P:meiotic cell cycle"/>
    <property type="evidence" value="ECO:0007669"/>
    <property type="project" value="UniProtKB-KW"/>
</dbReference>
<dbReference type="GO" id="GO:0043409">
    <property type="term" value="P:negative regulation of MAPK cascade"/>
    <property type="evidence" value="ECO:0000315"/>
    <property type="project" value="WormBase"/>
</dbReference>
<dbReference type="GO" id="GO:0002119">
    <property type="term" value="P:nematode larval development"/>
    <property type="evidence" value="ECO:0000315"/>
    <property type="project" value="WormBase"/>
</dbReference>
<dbReference type="GO" id="GO:0048477">
    <property type="term" value="P:oogenesis"/>
    <property type="evidence" value="ECO:0000315"/>
    <property type="project" value="WormBase"/>
</dbReference>
<dbReference type="GO" id="GO:0046579">
    <property type="term" value="P:positive regulation of Ras protein signal transduction"/>
    <property type="evidence" value="ECO:0000316"/>
    <property type="project" value="WormBase"/>
</dbReference>
<dbReference type="GO" id="GO:0040026">
    <property type="term" value="P:positive regulation of vulval development"/>
    <property type="evidence" value="ECO:0000316"/>
    <property type="project" value="WormBase"/>
</dbReference>
<dbReference type="CDD" id="cd05147">
    <property type="entry name" value="RIO1_euk"/>
    <property type="match status" value="1"/>
</dbReference>
<dbReference type="FunFam" id="1.10.510.10:FF:001028">
    <property type="entry name" value="Serine/threonine-protein kinase RIO1"/>
    <property type="match status" value="1"/>
</dbReference>
<dbReference type="FunFam" id="3.30.200.20:FF:000148">
    <property type="entry name" value="Serine/threonine-protein kinase RIO1"/>
    <property type="match status" value="1"/>
</dbReference>
<dbReference type="Gene3D" id="3.30.200.20">
    <property type="entry name" value="Phosphorylase Kinase, domain 1"/>
    <property type="match status" value="1"/>
</dbReference>
<dbReference type="Gene3D" id="1.10.510.10">
    <property type="entry name" value="Transferase(Phosphotransferase) domain 1"/>
    <property type="match status" value="1"/>
</dbReference>
<dbReference type="InterPro" id="IPR011009">
    <property type="entry name" value="Kinase-like_dom_sf"/>
</dbReference>
<dbReference type="InterPro" id="IPR051272">
    <property type="entry name" value="RIO-type_Ser/Thr_kinase"/>
</dbReference>
<dbReference type="InterPro" id="IPR018934">
    <property type="entry name" value="RIO_dom"/>
</dbReference>
<dbReference type="InterPro" id="IPR000687">
    <property type="entry name" value="RIO_kinase"/>
</dbReference>
<dbReference type="InterPro" id="IPR018935">
    <property type="entry name" value="RIO_kinase_CS"/>
</dbReference>
<dbReference type="InterPro" id="IPR017407">
    <property type="entry name" value="Ser/Thr_kinase_Rio1"/>
</dbReference>
<dbReference type="PANTHER" id="PTHR45723">
    <property type="entry name" value="SERINE/THREONINE-PROTEIN KINASE RIO1"/>
    <property type="match status" value="1"/>
</dbReference>
<dbReference type="Pfam" id="PF01163">
    <property type="entry name" value="RIO1"/>
    <property type="match status" value="1"/>
</dbReference>
<dbReference type="PIRSF" id="PIRSF038147">
    <property type="entry name" value="Ser/Thr_PK_RIO1"/>
    <property type="match status" value="1"/>
</dbReference>
<dbReference type="SMART" id="SM00090">
    <property type="entry name" value="RIO"/>
    <property type="match status" value="1"/>
</dbReference>
<dbReference type="SUPFAM" id="SSF56112">
    <property type="entry name" value="Protein kinase-like (PK-like)"/>
    <property type="match status" value="1"/>
</dbReference>
<dbReference type="PROSITE" id="PS01245">
    <property type="entry name" value="RIO1"/>
    <property type="match status" value="1"/>
</dbReference>
<evidence type="ECO:0000250" key="1">
    <source>
        <dbReference type="UniProtKB" id="G0S3J5"/>
    </source>
</evidence>
<evidence type="ECO:0000250" key="2">
    <source>
        <dbReference type="UniProtKB" id="Q12196"/>
    </source>
</evidence>
<evidence type="ECO:0000250" key="3">
    <source>
        <dbReference type="UniProtKB" id="Q9BRS2"/>
    </source>
</evidence>
<evidence type="ECO:0000255" key="4">
    <source>
        <dbReference type="PIRNR" id="PIRNR038147"/>
    </source>
</evidence>
<evidence type="ECO:0000255" key="5">
    <source>
        <dbReference type="PROSITE-ProRule" id="PRU00159"/>
    </source>
</evidence>
<evidence type="ECO:0000256" key="6">
    <source>
        <dbReference type="SAM" id="MobiDB-lite"/>
    </source>
</evidence>
<evidence type="ECO:0000269" key="7">
    <source>
    </source>
</evidence>
<evidence type="ECO:0000269" key="8">
    <source>
    </source>
</evidence>
<evidence type="ECO:0000305" key="9"/>
<evidence type="ECO:0000312" key="10">
    <source>
        <dbReference type="Proteomes" id="UP000001940"/>
    </source>
</evidence>
<evidence type="ECO:0000312" key="11">
    <source>
        <dbReference type="WormBase" id="M01B12.5a"/>
    </source>
</evidence>
<sequence>MEKVEHLNLNIQNILEDVDIDTASSSSDDEPEQAVVKQEKLEAGEQIEEQYDTDSDYDDDIVEFAEATGDFTKKLNAARLNTIGPNAARNRLTVDVERHADTSEDRKRKRVKDRADRATVEQVLDPRTRLVLFRLLQRGTLLNIDGCISTGKEANVYHATGTDNDLAIKIYKTSILTFKDRERYVTGEFRYRHGYCKSNPRKMVAVWAEKEMRNLARMHEVGLPVPKPHLLKGHVLVMDFLGKDGWPAPLLKNANLSQEDAEPMYVGLVRDMRRLYRECKLVHADLSEFNMLVHDGKLWIIDVSQSVEQDHPHALEFLRMDCNNVNKFFRELGVPVLSVRRLFEVIVDPLMSSKEMETIIEEERVLVNSEDDSLFMNAFIPHKLEHVLHFERDGKLAKEGVEANNPFQNIVSKIDLKGDGFGEEHDDSDDNDDEENGKKSRKKRAEPTEEEIQEKERKIAMHTRNREETAEERKERKAAVKEEKREQRKEKIPKHLKKRAHRQHMK</sequence>
<name>RIOK1_CAEEL</name>
<protein>
    <recommendedName>
        <fullName evidence="4">Serine/threonine-protein kinase RIO1</fullName>
        <ecNumber evidence="4">2.7.11.1</ecNumber>
    </recommendedName>
</protein>
<organism evidence="10">
    <name type="scientific">Caenorhabditis elegans</name>
    <dbReference type="NCBI Taxonomy" id="6239"/>
    <lineage>
        <taxon>Eukaryota</taxon>
        <taxon>Metazoa</taxon>
        <taxon>Ecdysozoa</taxon>
        <taxon>Nematoda</taxon>
        <taxon>Chromadorea</taxon>
        <taxon>Rhabditida</taxon>
        <taxon>Rhabditina</taxon>
        <taxon>Rhabditomorpha</taxon>
        <taxon>Rhabditoidea</taxon>
        <taxon>Rhabditidae</taxon>
        <taxon>Peloderinae</taxon>
        <taxon>Caenorhabditis</taxon>
    </lineage>
</organism>